<comment type="function">
    <text evidence="1">Required for pre-mRNA splicing as component of the spliceosome (By similarity). Core component of the splicing-dependent multiprotein exon junction complex (EJC) deposited at splice junctions on mRNAs. The EJC is a dynamic structure consisting of core proteins and several peripheral nuclear and cytoplasmic associated factors that join the complex only transiently either during EJC assembly or during subsequent mRNA metabolism. The EJC marks the position of the exon-exon junction in the mature mRNA for the gene expression machinery and the core components remain bound to spliced mRNAs throughout all stages of mRNA metabolism thereby influencing downstream processes including nuclear mRNA export, subcellular mRNA localization, translation efficiency and nonsense-mediated mRNA decay (NMD). Its removal from cytoplasmic mRNAs requires translation initiation from EJC-bearing spliced mRNAs. Associates preferentially with mRNAs produced by splicing. Does not interact with pre-mRNAs, introns, or mRNAs produced from intronless cDNAs. Associates with both nuclear mRNAs and newly exported cytoplasmic mRNAs (By similarity).</text>
</comment>
<comment type="subunit">
    <text evidence="1">Heterodimer with either MAGOH or MAGOHB. Part of the mRNA splicing-dependent exon junction complex (EJC) complex; the core complex contains CASC3, EIF4A3, MAGOH or MAGOHB, and RBM8A. Interacts with PYM1; the interaction is direct and dissociates the EJC from spliced mRNAs. Component of the ALYREF/THOC4-EJC-RNA complex; in the complex interacts with EIF4A3 and MAGOH; these interactions are likely specific to RNA-bound EJC (By similarity). Interacts with PYM1; the interaction is direct and dissociates the EJC from spliced mRNAs (By similarity). Part of a complex that contains the EJC core components CASC3, EIF4A3, MAGOH and RBM8A plus proteins involved in nonsense-mediated mRNA decay, such as UPF1, UPF2, UPF3A and UPF3B. Found in a post-splicing complex with NXF1, MAGOH, UPF1, UPF2, UPF3A, UPF3B and RNPS1. Interacts with DDX39B, MAGOH, DPH1, UPF3B, RNPS1, SRRM1 and ALYREF/THOC4. Interacts with IPO13; the interaction mediates the nuclear import of the MAGOH-RBM8A heterodimer. Identified in the spliceosome C complex. Associates with polysomes.</text>
</comment>
<comment type="subcellular location">
    <subcellularLocation>
        <location evidence="1">Nucleus</location>
    </subcellularLocation>
    <subcellularLocation>
        <location evidence="1">Nucleus speckle</location>
    </subcellularLocation>
    <subcellularLocation>
        <location evidence="1">Cytoplasm</location>
    </subcellularLocation>
    <text evidence="1">Nucleocytoplasmic shuttling protein. Travels to the cytoplasm as part of the exon junction complex (EJC) bound to mRNA. Colocalizes with the core EJC, ALYREF/THOC4, NXF1 and UAP56 in the nucleus and nuclear speckles.</text>
</comment>
<comment type="alternative products">
    <event type="alternative splicing"/>
    <isoform>
        <id>Q3ZCE8-1</id>
        <name>1</name>
        <sequence type="displayed"/>
    </isoform>
    <isoform>
        <id>Q3ZCE8-2</id>
        <name>2</name>
        <sequence type="described" ref="VSP_037600"/>
    </isoform>
</comment>
<comment type="similarity">
    <text evidence="5">Belongs to the RBM8A family.</text>
</comment>
<sequence length="174" mass="19889">MADVLDLHEAGGEDFAMDEDGDESIHKLKEKAKKRKGRGFGSEEGSRARMREDYDSVEQDGDEPGPQRSVEGWILFVTGVHEEATEEDIHDKFAEYGEIKNIHLNLDRRTGYLKGYTLVEYETYKEAQAAMEGLNGQDLMGQPISVDWCFVRGPPKGKRRGGRRRSRSPDRRRR</sequence>
<organism>
    <name type="scientific">Bos taurus</name>
    <name type="common">Bovine</name>
    <dbReference type="NCBI Taxonomy" id="9913"/>
    <lineage>
        <taxon>Eukaryota</taxon>
        <taxon>Metazoa</taxon>
        <taxon>Chordata</taxon>
        <taxon>Craniata</taxon>
        <taxon>Vertebrata</taxon>
        <taxon>Euteleostomi</taxon>
        <taxon>Mammalia</taxon>
        <taxon>Eutheria</taxon>
        <taxon>Laurasiatheria</taxon>
        <taxon>Artiodactyla</taxon>
        <taxon>Ruminantia</taxon>
        <taxon>Pecora</taxon>
        <taxon>Bovidae</taxon>
        <taxon>Bovinae</taxon>
        <taxon>Bos</taxon>
    </lineage>
</organism>
<proteinExistence type="evidence at transcript level"/>
<gene>
    <name type="primary">RBM8A</name>
</gene>
<keyword id="KW-0007">Acetylation</keyword>
<keyword id="KW-0025">Alternative splicing</keyword>
<keyword id="KW-0963">Cytoplasm</keyword>
<keyword id="KW-1017">Isopeptide bond</keyword>
<keyword id="KW-0507">mRNA processing</keyword>
<keyword id="KW-0508">mRNA splicing</keyword>
<keyword id="KW-0509">mRNA transport</keyword>
<keyword id="KW-0866">Nonsense-mediated mRNA decay</keyword>
<keyword id="KW-0539">Nucleus</keyword>
<keyword id="KW-0597">Phosphoprotein</keyword>
<keyword id="KW-1185">Reference proteome</keyword>
<keyword id="KW-0694">RNA-binding</keyword>
<keyword id="KW-0747">Spliceosome</keyword>
<keyword id="KW-0810">Translation regulation</keyword>
<keyword id="KW-0813">Transport</keyword>
<keyword id="KW-0832">Ubl conjugation</keyword>
<dbReference type="EMBL" id="BT025376">
    <property type="protein sequence ID" value="ABF57332.1"/>
    <property type="molecule type" value="mRNA"/>
</dbReference>
<dbReference type="EMBL" id="BC102484">
    <property type="protein sequence ID" value="AAI02485.1"/>
    <property type="molecule type" value="mRNA"/>
</dbReference>
<dbReference type="RefSeq" id="NP_001030401.1">
    <molecule id="Q3ZCE8-2"/>
    <property type="nucleotide sequence ID" value="NM_001035324.2"/>
</dbReference>
<dbReference type="RefSeq" id="XP_015318708.1">
    <property type="nucleotide sequence ID" value="XM_015463222.1"/>
</dbReference>
<dbReference type="SMR" id="Q3ZCE8"/>
<dbReference type="FunCoup" id="Q3ZCE8">
    <property type="interactions" value="4846"/>
</dbReference>
<dbReference type="STRING" id="9913.ENSBTAP00000011015"/>
<dbReference type="PaxDb" id="9913-ENSBTAP00000011016"/>
<dbReference type="PeptideAtlas" id="Q3ZCE8"/>
<dbReference type="GeneID" id="518045"/>
<dbReference type="KEGG" id="bta:518045"/>
<dbReference type="CTD" id="9939"/>
<dbReference type="eggNOG" id="KOG0130">
    <property type="taxonomic scope" value="Eukaryota"/>
</dbReference>
<dbReference type="HOGENOM" id="CLU_012062_18_3_1"/>
<dbReference type="InParanoid" id="Q3ZCE8"/>
<dbReference type="OrthoDB" id="15688at2759"/>
<dbReference type="TreeFam" id="TF314933"/>
<dbReference type="Proteomes" id="UP000009136">
    <property type="component" value="Unplaced"/>
</dbReference>
<dbReference type="GO" id="GO:0005737">
    <property type="term" value="C:cytoplasm"/>
    <property type="evidence" value="ECO:0007669"/>
    <property type="project" value="UniProtKB-SubCell"/>
</dbReference>
<dbReference type="GO" id="GO:0035145">
    <property type="term" value="C:exon-exon junction complex"/>
    <property type="evidence" value="ECO:0000318"/>
    <property type="project" value="GO_Central"/>
</dbReference>
<dbReference type="GO" id="GO:0016607">
    <property type="term" value="C:nuclear speck"/>
    <property type="evidence" value="ECO:0007669"/>
    <property type="project" value="UniProtKB-SubCell"/>
</dbReference>
<dbReference type="GO" id="GO:0005634">
    <property type="term" value="C:nucleus"/>
    <property type="evidence" value="ECO:0000250"/>
    <property type="project" value="UniProtKB"/>
</dbReference>
<dbReference type="GO" id="GO:0071006">
    <property type="term" value="C:U2-type catalytic step 1 spliceosome"/>
    <property type="evidence" value="ECO:0000250"/>
    <property type="project" value="UniProtKB"/>
</dbReference>
<dbReference type="GO" id="GO:0003729">
    <property type="term" value="F:mRNA binding"/>
    <property type="evidence" value="ECO:0000318"/>
    <property type="project" value="GO_Central"/>
</dbReference>
<dbReference type="GO" id="GO:0000398">
    <property type="term" value="P:mRNA splicing, via spliceosome"/>
    <property type="evidence" value="ECO:0000250"/>
    <property type="project" value="UniProtKB"/>
</dbReference>
<dbReference type="GO" id="GO:0051028">
    <property type="term" value="P:mRNA transport"/>
    <property type="evidence" value="ECO:0007669"/>
    <property type="project" value="UniProtKB-KW"/>
</dbReference>
<dbReference type="GO" id="GO:0000184">
    <property type="term" value="P:nuclear-transcribed mRNA catabolic process, nonsense-mediated decay"/>
    <property type="evidence" value="ECO:0007669"/>
    <property type="project" value="UniProtKB-KW"/>
</dbReference>
<dbReference type="GO" id="GO:0000381">
    <property type="term" value="P:regulation of alternative mRNA splicing, via spliceosome"/>
    <property type="evidence" value="ECO:0000250"/>
    <property type="project" value="UniProtKB"/>
</dbReference>
<dbReference type="GO" id="GO:0006417">
    <property type="term" value="P:regulation of translation"/>
    <property type="evidence" value="ECO:0007669"/>
    <property type="project" value="UniProtKB-KW"/>
</dbReference>
<dbReference type="GO" id="GO:0008380">
    <property type="term" value="P:RNA splicing"/>
    <property type="evidence" value="ECO:0000318"/>
    <property type="project" value="GO_Central"/>
</dbReference>
<dbReference type="CDD" id="cd12324">
    <property type="entry name" value="RRM_RBM8"/>
    <property type="match status" value="1"/>
</dbReference>
<dbReference type="FunFam" id="3.30.70.330:FF:000157">
    <property type="entry name" value="RNA-binding protein 8A"/>
    <property type="match status" value="1"/>
</dbReference>
<dbReference type="Gene3D" id="3.30.70.330">
    <property type="match status" value="1"/>
</dbReference>
<dbReference type="InterPro" id="IPR012677">
    <property type="entry name" value="Nucleotide-bd_a/b_plait_sf"/>
</dbReference>
<dbReference type="InterPro" id="IPR035979">
    <property type="entry name" value="RBD_domain_sf"/>
</dbReference>
<dbReference type="InterPro" id="IPR008111">
    <property type="entry name" value="RNA-bd_8"/>
</dbReference>
<dbReference type="InterPro" id="IPR000504">
    <property type="entry name" value="RRM_dom"/>
</dbReference>
<dbReference type="InterPro" id="IPR033744">
    <property type="entry name" value="RRM_RBM8"/>
</dbReference>
<dbReference type="PANTHER" id="PTHR45894">
    <property type="entry name" value="RNA-BINDING PROTEIN 8A"/>
    <property type="match status" value="1"/>
</dbReference>
<dbReference type="Pfam" id="PF00076">
    <property type="entry name" value="RRM_1"/>
    <property type="match status" value="1"/>
</dbReference>
<dbReference type="PRINTS" id="PR01738">
    <property type="entry name" value="RNABINDINGM8"/>
</dbReference>
<dbReference type="SMART" id="SM00360">
    <property type="entry name" value="RRM"/>
    <property type="match status" value="1"/>
</dbReference>
<dbReference type="SUPFAM" id="SSF54928">
    <property type="entry name" value="RNA-binding domain, RBD"/>
    <property type="match status" value="1"/>
</dbReference>
<dbReference type="PROSITE" id="PS50102">
    <property type="entry name" value="RRM"/>
    <property type="match status" value="1"/>
</dbReference>
<protein>
    <recommendedName>
        <fullName>RNA-binding protein 8A</fullName>
    </recommendedName>
    <alternativeName>
        <fullName>RNA-binding motif protein 8A</fullName>
    </alternativeName>
</protein>
<feature type="initiator methionine" description="Removed" evidence="1">
    <location>
        <position position="1"/>
    </location>
</feature>
<feature type="chain" id="PRO_0000282605" description="RNA-binding protein 8A">
    <location>
        <begin position="2"/>
        <end position="174"/>
    </location>
</feature>
<feature type="domain" description="RRM" evidence="2">
    <location>
        <begin position="73"/>
        <end position="151"/>
    </location>
</feature>
<feature type="region of interest" description="Disordered" evidence="3">
    <location>
        <begin position="1"/>
        <end position="70"/>
    </location>
</feature>
<feature type="region of interest" description="Disordered" evidence="3">
    <location>
        <begin position="151"/>
        <end position="174"/>
    </location>
</feature>
<feature type="compositionally biased region" description="Basic and acidic residues" evidence="3">
    <location>
        <begin position="1"/>
        <end position="11"/>
    </location>
</feature>
<feature type="compositionally biased region" description="Basic residues" evidence="3">
    <location>
        <begin position="28"/>
        <end position="38"/>
    </location>
</feature>
<feature type="compositionally biased region" description="Basic and acidic residues" evidence="3">
    <location>
        <begin position="44"/>
        <end position="54"/>
    </location>
</feature>
<feature type="compositionally biased region" description="Basic residues" evidence="3">
    <location>
        <begin position="155"/>
        <end position="174"/>
    </location>
</feature>
<feature type="modified residue" description="N-acetylalanine" evidence="1">
    <location>
        <position position="2"/>
    </location>
</feature>
<feature type="modified residue" description="Phosphoserine" evidence="1">
    <location>
        <position position="24"/>
    </location>
</feature>
<feature type="modified residue" description="Phosphoserine" evidence="1">
    <location>
        <position position="42"/>
    </location>
</feature>
<feature type="modified residue" description="Phosphoserine" evidence="1">
    <location>
        <position position="56"/>
    </location>
</feature>
<feature type="cross-link" description="Glycyl lysine isopeptide (Lys-Gly) (interchain with G-Cter in SUMO2)" evidence="1">
    <location>
        <position position="27"/>
    </location>
</feature>
<feature type="splice variant" id="VSP_037600" description="In isoform 2." evidence="4">
    <location>
        <position position="43"/>
    </location>
</feature>
<accession>Q3ZCE8</accession>
<accession>Q1JPH7</accession>
<name>RBM8A_BOVIN</name>
<reference key="1">
    <citation type="journal article" date="2005" name="BMC Genomics">
        <title>Characterization of 954 bovine full-CDS cDNA sequences.</title>
        <authorList>
            <person name="Harhay G.P."/>
            <person name="Sonstegard T.S."/>
            <person name="Keele J.W."/>
            <person name="Heaton M.P."/>
            <person name="Clawson M.L."/>
            <person name="Snelling W.M."/>
            <person name="Wiedmann R.T."/>
            <person name="Van Tassell C.P."/>
            <person name="Smith T.P.L."/>
        </authorList>
    </citation>
    <scope>NUCLEOTIDE SEQUENCE [LARGE SCALE MRNA] (ISOFORM 1)</scope>
</reference>
<reference key="2">
    <citation type="submission" date="2005-08" db="EMBL/GenBank/DDBJ databases">
        <authorList>
            <consortium name="NIH - Mammalian Gene Collection (MGC) project"/>
        </authorList>
    </citation>
    <scope>NUCLEOTIDE SEQUENCE [LARGE SCALE MRNA] (ISOFORM 2)</scope>
    <source>
        <strain>Crossbred X Angus</strain>
        <tissue>Ileum</tissue>
    </source>
</reference>
<evidence type="ECO:0000250" key="1">
    <source>
        <dbReference type="UniProtKB" id="Q9Y5S9"/>
    </source>
</evidence>
<evidence type="ECO:0000255" key="2">
    <source>
        <dbReference type="PROSITE-ProRule" id="PRU00176"/>
    </source>
</evidence>
<evidence type="ECO:0000256" key="3">
    <source>
        <dbReference type="SAM" id="MobiDB-lite"/>
    </source>
</evidence>
<evidence type="ECO:0000303" key="4">
    <source ref="2"/>
</evidence>
<evidence type="ECO:0000305" key="5"/>